<gene>
    <name evidence="1" type="primary">rplP</name>
    <name type="ordered locus">BMA10247_3485</name>
</gene>
<organism>
    <name type="scientific">Burkholderia mallei (strain NCTC 10247)</name>
    <dbReference type="NCBI Taxonomy" id="320389"/>
    <lineage>
        <taxon>Bacteria</taxon>
        <taxon>Pseudomonadati</taxon>
        <taxon>Pseudomonadota</taxon>
        <taxon>Betaproteobacteria</taxon>
        <taxon>Burkholderiales</taxon>
        <taxon>Burkholderiaceae</taxon>
        <taxon>Burkholderia</taxon>
        <taxon>pseudomallei group</taxon>
    </lineage>
</organism>
<name>RL16_BURM7</name>
<comment type="function">
    <text evidence="1">Binds 23S rRNA and is also seen to make contacts with the A and possibly P site tRNAs.</text>
</comment>
<comment type="subunit">
    <text evidence="1">Part of the 50S ribosomal subunit.</text>
</comment>
<comment type="similarity">
    <text evidence="1">Belongs to the universal ribosomal protein uL16 family.</text>
</comment>
<feature type="chain" id="PRO_1000054589" description="Large ribosomal subunit protein uL16">
    <location>
        <begin position="1"/>
        <end position="138"/>
    </location>
</feature>
<feature type="region of interest" description="Disordered" evidence="2">
    <location>
        <begin position="1"/>
        <end position="20"/>
    </location>
</feature>
<feature type="compositionally biased region" description="Basic residues" evidence="2">
    <location>
        <begin position="1"/>
        <end position="13"/>
    </location>
</feature>
<proteinExistence type="inferred from homology"/>
<evidence type="ECO:0000255" key="1">
    <source>
        <dbReference type="HAMAP-Rule" id="MF_01342"/>
    </source>
</evidence>
<evidence type="ECO:0000256" key="2">
    <source>
        <dbReference type="SAM" id="MobiDB-lite"/>
    </source>
</evidence>
<evidence type="ECO:0000305" key="3"/>
<keyword id="KW-0687">Ribonucleoprotein</keyword>
<keyword id="KW-0689">Ribosomal protein</keyword>
<keyword id="KW-0694">RNA-binding</keyword>
<keyword id="KW-0699">rRNA-binding</keyword>
<keyword id="KW-0820">tRNA-binding</keyword>
<reference key="1">
    <citation type="journal article" date="2010" name="Genome Biol. Evol.">
        <title>Continuing evolution of Burkholderia mallei through genome reduction and large-scale rearrangements.</title>
        <authorList>
            <person name="Losada L."/>
            <person name="Ronning C.M."/>
            <person name="DeShazer D."/>
            <person name="Woods D."/>
            <person name="Fedorova N."/>
            <person name="Kim H.S."/>
            <person name="Shabalina S.A."/>
            <person name="Pearson T.R."/>
            <person name="Brinkac L."/>
            <person name="Tan P."/>
            <person name="Nandi T."/>
            <person name="Crabtree J."/>
            <person name="Badger J."/>
            <person name="Beckstrom-Sternberg S."/>
            <person name="Saqib M."/>
            <person name="Schutzer S.E."/>
            <person name="Keim P."/>
            <person name="Nierman W.C."/>
        </authorList>
    </citation>
    <scope>NUCLEOTIDE SEQUENCE [LARGE SCALE GENOMIC DNA]</scope>
    <source>
        <strain>NCTC 10247</strain>
    </source>
</reference>
<accession>A3MRW1</accession>
<sequence length="138" mass="15583">MLQPKRRKYRKEQKGRNTGIATRGNAVSFGEFGLKAVGRGRLTARQIEAARRAMTRHIKRGGRIWIRIFPDKPISQKPAEVRMGNGKGNPEYYVAEIQPGKMLYEMDGVSEELAREAFRLAAAKLPLKTTFIVRQLGA</sequence>
<dbReference type="EMBL" id="CP000548">
    <property type="protein sequence ID" value="ABO06939.1"/>
    <property type="molecule type" value="Genomic_DNA"/>
</dbReference>
<dbReference type="RefSeq" id="WP_004199857.1">
    <property type="nucleotide sequence ID" value="NZ_CP007802.1"/>
</dbReference>
<dbReference type="SMR" id="A3MRW1"/>
<dbReference type="GeneID" id="93061825"/>
<dbReference type="KEGG" id="bmaz:BM44_3034"/>
<dbReference type="KEGG" id="bmn:BMA10247_3485"/>
<dbReference type="PATRIC" id="fig|320389.8.peg.3406"/>
<dbReference type="GO" id="GO:0022625">
    <property type="term" value="C:cytosolic large ribosomal subunit"/>
    <property type="evidence" value="ECO:0007669"/>
    <property type="project" value="TreeGrafter"/>
</dbReference>
<dbReference type="GO" id="GO:0019843">
    <property type="term" value="F:rRNA binding"/>
    <property type="evidence" value="ECO:0007669"/>
    <property type="project" value="UniProtKB-UniRule"/>
</dbReference>
<dbReference type="GO" id="GO:0003735">
    <property type="term" value="F:structural constituent of ribosome"/>
    <property type="evidence" value="ECO:0007669"/>
    <property type="project" value="InterPro"/>
</dbReference>
<dbReference type="GO" id="GO:0000049">
    <property type="term" value="F:tRNA binding"/>
    <property type="evidence" value="ECO:0007669"/>
    <property type="project" value="UniProtKB-KW"/>
</dbReference>
<dbReference type="GO" id="GO:0006412">
    <property type="term" value="P:translation"/>
    <property type="evidence" value="ECO:0007669"/>
    <property type="project" value="UniProtKB-UniRule"/>
</dbReference>
<dbReference type="CDD" id="cd01433">
    <property type="entry name" value="Ribosomal_L16_L10e"/>
    <property type="match status" value="1"/>
</dbReference>
<dbReference type="FunFam" id="3.90.1170.10:FF:000001">
    <property type="entry name" value="50S ribosomal protein L16"/>
    <property type="match status" value="1"/>
</dbReference>
<dbReference type="Gene3D" id="3.90.1170.10">
    <property type="entry name" value="Ribosomal protein L10e/L16"/>
    <property type="match status" value="1"/>
</dbReference>
<dbReference type="HAMAP" id="MF_01342">
    <property type="entry name" value="Ribosomal_uL16"/>
    <property type="match status" value="1"/>
</dbReference>
<dbReference type="InterPro" id="IPR047873">
    <property type="entry name" value="Ribosomal_uL16"/>
</dbReference>
<dbReference type="InterPro" id="IPR000114">
    <property type="entry name" value="Ribosomal_uL16_bact-type"/>
</dbReference>
<dbReference type="InterPro" id="IPR020798">
    <property type="entry name" value="Ribosomal_uL16_CS"/>
</dbReference>
<dbReference type="InterPro" id="IPR016180">
    <property type="entry name" value="Ribosomal_uL16_dom"/>
</dbReference>
<dbReference type="InterPro" id="IPR036920">
    <property type="entry name" value="Ribosomal_uL16_sf"/>
</dbReference>
<dbReference type="NCBIfam" id="TIGR01164">
    <property type="entry name" value="rplP_bact"/>
    <property type="match status" value="1"/>
</dbReference>
<dbReference type="PANTHER" id="PTHR12220">
    <property type="entry name" value="50S/60S RIBOSOMAL PROTEIN L16"/>
    <property type="match status" value="1"/>
</dbReference>
<dbReference type="PANTHER" id="PTHR12220:SF13">
    <property type="entry name" value="LARGE RIBOSOMAL SUBUNIT PROTEIN UL16M"/>
    <property type="match status" value="1"/>
</dbReference>
<dbReference type="Pfam" id="PF00252">
    <property type="entry name" value="Ribosomal_L16"/>
    <property type="match status" value="1"/>
</dbReference>
<dbReference type="PRINTS" id="PR00060">
    <property type="entry name" value="RIBOSOMALL16"/>
</dbReference>
<dbReference type="SUPFAM" id="SSF54686">
    <property type="entry name" value="Ribosomal protein L16p/L10e"/>
    <property type="match status" value="1"/>
</dbReference>
<dbReference type="PROSITE" id="PS00586">
    <property type="entry name" value="RIBOSOMAL_L16_1"/>
    <property type="match status" value="1"/>
</dbReference>
<protein>
    <recommendedName>
        <fullName evidence="1">Large ribosomal subunit protein uL16</fullName>
    </recommendedName>
    <alternativeName>
        <fullName evidence="3">50S ribosomal protein L16</fullName>
    </alternativeName>
</protein>